<sequence length="240" mass="25573">MGSCQAGHNLHLCLAHHPPLVCATLILLLLGLSGLGLGGFLLTHTTGLRSPDIPQDWVSFLRSFGQLSLCPMNETVTGTWQGPHVVGLLTTLNFGDGPDRNKTQTFQAKIHGSQIGLTGSSAGESVLVTARVASGRTPGTCLYFSGVPKVLPSSQPPISCSEEGVGNATLSPVMGEECVRVWSHERLVLTELLTSEELALCGSRVLGLGFFLVLLCGLLCCTTAVCFHPRPEFHWSRTRL</sequence>
<proteinExistence type="evidence at transcript level"/>
<name>TM219_MOUSE</name>
<accession>Q9D123</accession>
<accession>Q9D6H1</accession>
<organism>
    <name type="scientific">Mus musculus</name>
    <name type="common">Mouse</name>
    <dbReference type="NCBI Taxonomy" id="10090"/>
    <lineage>
        <taxon>Eukaryota</taxon>
        <taxon>Metazoa</taxon>
        <taxon>Chordata</taxon>
        <taxon>Craniata</taxon>
        <taxon>Vertebrata</taxon>
        <taxon>Euteleostomi</taxon>
        <taxon>Mammalia</taxon>
        <taxon>Eutheria</taxon>
        <taxon>Euarchontoglires</taxon>
        <taxon>Glires</taxon>
        <taxon>Rodentia</taxon>
        <taxon>Myomorpha</taxon>
        <taxon>Muroidea</taxon>
        <taxon>Muridae</taxon>
        <taxon>Murinae</taxon>
        <taxon>Mus</taxon>
        <taxon>Mus</taxon>
    </lineage>
</organism>
<reference key="1">
    <citation type="journal article" date="2005" name="Science">
        <title>The transcriptional landscape of the mammalian genome.</title>
        <authorList>
            <person name="Carninci P."/>
            <person name="Kasukawa T."/>
            <person name="Katayama S."/>
            <person name="Gough J."/>
            <person name="Frith M.C."/>
            <person name="Maeda N."/>
            <person name="Oyama R."/>
            <person name="Ravasi T."/>
            <person name="Lenhard B."/>
            <person name="Wells C."/>
            <person name="Kodzius R."/>
            <person name="Shimokawa K."/>
            <person name="Bajic V.B."/>
            <person name="Brenner S.E."/>
            <person name="Batalov S."/>
            <person name="Forrest A.R."/>
            <person name="Zavolan M."/>
            <person name="Davis M.J."/>
            <person name="Wilming L.G."/>
            <person name="Aidinis V."/>
            <person name="Allen J.E."/>
            <person name="Ambesi-Impiombato A."/>
            <person name="Apweiler R."/>
            <person name="Aturaliya R.N."/>
            <person name="Bailey T.L."/>
            <person name="Bansal M."/>
            <person name="Baxter L."/>
            <person name="Beisel K.W."/>
            <person name="Bersano T."/>
            <person name="Bono H."/>
            <person name="Chalk A.M."/>
            <person name="Chiu K.P."/>
            <person name="Choudhary V."/>
            <person name="Christoffels A."/>
            <person name="Clutterbuck D.R."/>
            <person name="Crowe M.L."/>
            <person name="Dalla E."/>
            <person name="Dalrymple B.P."/>
            <person name="de Bono B."/>
            <person name="Della Gatta G."/>
            <person name="di Bernardo D."/>
            <person name="Down T."/>
            <person name="Engstrom P."/>
            <person name="Fagiolini M."/>
            <person name="Faulkner G."/>
            <person name="Fletcher C.F."/>
            <person name="Fukushima T."/>
            <person name="Furuno M."/>
            <person name="Futaki S."/>
            <person name="Gariboldi M."/>
            <person name="Georgii-Hemming P."/>
            <person name="Gingeras T.R."/>
            <person name="Gojobori T."/>
            <person name="Green R.E."/>
            <person name="Gustincich S."/>
            <person name="Harbers M."/>
            <person name="Hayashi Y."/>
            <person name="Hensch T.K."/>
            <person name="Hirokawa N."/>
            <person name="Hill D."/>
            <person name="Huminiecki L."/>
            <person name="Iacono M."/>
            <person name="Ikeo K."/>
            <person name="Iwama A."/>
            <person name="Ishikawa T."/>
            <person name="Jakt M."/>
            <person name="Kanapin A."/>
            <person name="Katoh M."/>
            <person name="Kawasawa Y."/>
            <person name="Kelso J."/>
            <person name="Kitamura H."/>
            <person name="Kitano H."/>
            <person name="Kollias G."/>
            <person name="Krishnan S.P."/>
            <person name="Kruger A."/>
            <person name="Kummerfeld S.K."/>
            <person name="Kurochkin I.V."/>
            <person name="Lareau L.F."/>
            <person name="Lazarevic D."/>
            <person name="Lipovich L."/>
            <person name="Liu J."/>
            <person name="Liuni S."/>
            <person name="McWilliam S."/>
            <person name="Madan Babu M."/>
            <person name="Madera M."/>
            <person name="Marchionni L."/>
            <person name="Matsuda H."/>
            <person name="Matsuzawa S."/>
            <person name="Miki H."/>
            <person name="Mignone F."/>
            <person name="Miyake S."/>
            <person name="Morris K."/>
            <person name="Mottagui-Tabar S."/>
            <person name="Mulder N."/>
            <person name="Nakano N."/>
            <person name="Nakauchi H."/>
            <person name="Ng P."/>
            <person name="Nilsson R."/>
            <person name="Nishiguchi S."/>
            <person name="Nishikawa S."/>
            <person name="Nori F."/>
            <person name="Ohara O."/>
            <person name="Okazaki Y."/>
            <person name="Orlando V."/>
            <person name="Pang K.C."/>
            <person name="Pavan W.J."/>
            <person name="Pavesi G."/>
            <person name="Pesole G."/>
            <person name="Petrovsky N."/>
            <person name="Piazza S."/>
            <person name="Reed J."/>
            <person name="Reid J.F."/>
            <person name="Ring B.Z."/>
            <person name="Ringwald M."/>
            <person name="Rost B."/>
            <person name="Ruan Y."/>
            <person name="Salzberg S.L."/>
            <person name="Sandelin A."/>
            <person name="Schneider C."/>
            <person name="Schoenbach C."/>
            <person name="Sekiguchi K."/>
            <person name="Semple C.A."/>
            <person name="Seno S."/>
            <person name="Sessa L."/>
            <person name="Sheng Y."/>
            <person name="Shibata Y."/>
            <person name="Shimada H."/>
            <person name="Shimada K."/>
            <person name="Silva D."/>
            <person name="Sinclair B."/>
            <person name="Sperling S."/>
            <person name="Stupka E."/>
            <person name="Sugiura K."/>
            <person name="Sultana R."/>
            <person name="Takenaka Y."/>
            <person name="Taki K."/>
            <person name="Tammoja K."/>
            <person name="Tan S.L."/>
            <person name="Tang S."/>
            <person name="Taylor M.S."/>
            <person name="Tegner J."/>
            <person name="Teichmann S.A."/>
            <person name="Ueda H.R."/>
            <person name="van Nimwegen E."/>
            <person name="Verardo R."/>
            <person name="Wei C.L."/>
            <person name="Yagi K."/>
            <person name="Yamanishi H."/>
            <person name="Zabarovsky E."/>
            <person name="Zhu S."/>
            <person name="Zimmer A."/>
            <person name="Hide W."/>
            <person name="Bult C."/>
            <person name="Grimmond S.M."/>
            <person name="Teasdale R.D."/>
            <person name="Liu E.T."/>
            <person name="Brusic V."/>
            <person name="Quackenbush J."/>
            <person name="Wahlestedt C."/>
            <person name="Mattick J.S."/>
            <person name="Hume D.A."/>
            <person name="Kai C."/>
            <person name="Sasaki D."/>
            <person name="Tomaru Y."/>
            <person name="Fukuda S."/>
            <person name="Kanamori-Katayama M."/>
            <person name="Suzuki M."/>
            <person name="Aoki J."/>
            <person name="Arakawa T."/>
            <person name="Iida J."/>
            <person name="Imamura K."/>
            <person name="Itoh M."/>
            <person name="Kato T."/>
            <person name="Kawaji H."/>
            <person name="Kawagashira N."/>
            <person name="Kawashima T."/>
            <person name="Kojima M."/>
            <person name="Kondo S."/>
            <person name="Konno H."/>
            <person name="Nakano K."/>
            <person name="Ninomiya N."/>
            <person name="Nishio T."/>
            <person name="Okada M."/>
            <person name="Plessy C."/>
            <person name="Shibata K."/>
            <person name="Shiraki T."/>
            <person name="Suzuki S."/>
            <person name="Tagami M."/>
            <person name="Waki K."/>
            <person name="Watahiki A."/>
            <person name="Okamura-Oho Y."/>
            <person name="Suzuki H."/>
            <person name="Kawai J."/>
            <person name="Hayashizaki Y."/>
        </authorList>
    </citation>
    <scope>NUCLEOTIDE SEQUENCE [LARGE SCALE MRNA] (ISOFORMS 1 AND 2)</scope>
    <source>
        <strain>C57BL/6J</strain>
        <tissue>Bone marrow</tissue>
        <tissue>Hippocampus</tissue>
    </source>
</reference>
<reference key="2">
    <citation type="journal article" date="2004" name="Genome Res.">
        <title>The status, quality, and expansion of the NIH full-length cDNA project: the Mammalian Gene Collection (MGC).</title>
        <authorList>
            <consortium name="The MGC Project Team"/>
        </authorList>
    </citation>
    <scope>NUCLEOTIDE SEQUENCE [LARGE SCALE MRNA] (ISOFORM 1)</scope>
    <source>
        <strain>C57BL/6J</strain>
        <tissue>Brain</tissue>
        <tissue>Mammary tumor</tissue>
    </source>
</reference>
<gene>
    <name type="primary">Tmem219</name>
</gene>
<comment type="function">
    <text evidence="1">Cell death receptor specific for IGFBP3, may mediate caspase-8-dependent apoptosis upon ligand binding.</text>
</comment>
<comment type="subunit">
    <text evidence="1">Interacts with IGFBP3. Interacts with CASP8 (By similarity).</text>
</comment>
<comment type="subcellular location">
    <subcellularLocation>
        <location evidence="1">Cell membrane</location>
        <topology>Single-pass membrane protein</topology>
    </subcellularLocation>
</comment>
<comment type="alternative products">
    <event type="alternative splicing"/>
    <isoform>
        <id>Q9D123-1</id>
        <name>1</name>
        <sequence type="displayed"/>
    </isoform>
    <isoform>
        <id>Q9D123-2</id>
        <name>2</name>
        <sequence type="described" ref="VSP_032932 VSP_032933 VSP_032934"/>
    </isoform>
</comment>
<feature type="signal peptide" evidence="2">
    <location>
        <begin position="1"/>
        <end position="38"/>
    </location>
</feature>
<feature type="chain" id="PRO_0000329050" description="Insulin-like growth factor-binding protein 3 receptor">
    <location>
        <begin position="39"/>
        <end position="240"/>
    </location>
</feature>
<feature type="topological domain" description="Extracellular" evidence="2">
    <location>
        <begin position="39"/>
        <end position="204"/>
    </location>
</feature>
<feature type="transmembrane region" description="Helical" evidence="2">
    <location>
        <begin position="205"/>
        <end position="225"/>
    </location>
</feature>
<feature type="topological domain" description="Cytoplasmic" evidence="2">
    <location>
        <begin position="226"/>
        <end position="240"/>
    </location>
</feature>
<feature type="glycosylation site" description="N-linked (GlcNAc...) asparagine" evidence="2">
    <location>
        <position position="167"/>
    </location>
</feature>
<feature type="splice variant" id="VSP_032932" description="In isoform 2." evidence="3">
    <location>
        <begin position="1"/>
        <end position="71"/>
    </location>
</feature>
<feature type="splice variant" id="VSP_032933" description="In isoform 2." evidence="3">
    <original>EEL</original>
    <variation>VSA</variation>
    <location>
        <begin position="196"/>
        <end position="198"/>
    </location>
</feature>
<feature type="splice variant" id="VSP_032934" description="In isoform 2." evidence="3">
    <location>
        <begin position="199"/>
        <end position="240"/>
    </location>
</feature>
<evidence type="ECO:0000250" key="1"/>
<evidence type="ECO:0000255" key="2"/>
<evidence type="ECO:0000303" key="3">
    <source>
    </source>
</evidence>
<dbReference type="EMBL" id="AK004043">
    <property type="protein sequence ID" value="BAB23139.1"/>
    <property type="molecule type" value="mRNA"/>
</dbReference>
<dbReference type="EMBL" id="AK013646">
    <property type="protein sequence ID" value="BAB28936.1"/>
    <property type="molecule type" value="mRNA"/>
</dbReference>
<dbReference type="EMBL" id="AK152526">
    <property type="protein sequence ID" value="BAE31285.1"/>
    <property type="molecule type" value="mRNA"/>
</dbReference>
<dbReference type="EMBL" id="BC023442">
    <property type="protein sequence ID" value="AAH23442.1"/>
    <property type="molecule type" value="mRNA"/>
</dbReference>
<dbReference type="EMBL" id="BC046763">
    <property type="protein sequence ID" value="AAH46763.1"/>
    <property type="molecule type" value="mRNA"/>
</dbReference>
<dbReference type="CCDS" id="CCDS40133.1">
    <molecule id="Q9D123-1"/>
</dbReference>
<dbReference type="RefSeq" id="NP_081103.1">
    <molecule id="Q9D123-1"/>
    <property type="nucleotide sequence ID" value="NM_026827.1"/>
</dbReference>
<dbReference type="RefSeq" id="NP_082665.1">
    <molecule id="Q9D123-1"/>
    <property type="nucleotide sequence ID" value="NM_028389.1"/>
</dbReference>
<dbReference type="RefSeq" id="XP_006508220.1">
    <property type="nucleotide sequence ID" value="XM_006508157.3"/>
</dbReference>
<dbReference type="RefSeq" id="XP_006508221.1">
    <property type="nucleotide sequence ID" value="XM_006508158.3"/>
</dbReference>
<dbReference type="SMR" id="Q9D123"/>
<dbReference type="CORUM" id="Q9D123"/>
<dbReference type="FunCoup" id="Q9D123">
    <property type="interactions" value="4"/>
</dbReference>
<dbReference type="IntAct" id="Q9D123">
    <property type="interactions" value="1"/>
</dbReference>
<dbReference type="STRING" id="10090.ENSMUSP00000032926"/>
<dbReference type="GlyCosmos" id="Q9D123">
    <property type="glycosylation" value="1 site, No reported glycans"/>
</dbReference>
<dbReference type="GlyGen" id="Q9D123">
    <property type="glycosylation" value="1 site"/>
</dbReference>
<dbReference type="PhosphoSitePlus" id="Q9D123"/>
<dbReference type="PaxDb" id="10090-ENSMUSP00000032926"/>
<dbReference type="ProteomicsDB" id="260686">
    <molecule id="Q9D123-1"/>
</dbReference>
<dbReference type="ProteomicsDB" id="260687">
    <molecule id="Q9D123-2"/>
</dbReference>
<dbReference type="Antibodypedia" id="68649">
    <property type="antibodies" value="10 antibodies from 7 providers"/>
</dbReference>
<dbReference type="Ensembl" id="ENSMUST00000032926.12">
    <molecule id="Q9D123-1"/>
    <property type="protein sequence ID" value="ENSMUSP00000032926.6"/>
    <property type="gene ID" value="ENSMUSG00000060538.15"/>
</dbReference>
<dbReference type="Ensembl" id="ENSMUST00000121532.8">
    <molecule id="Q9D123-1"/>
    <property type="protein sequence ID" value="ENSMUSP00000112485.2"/>
    <property type="gene ID" value="ENSMUSG00000060538.15"/>
</dbReference>
<dbReference type="GeneID" id="68742"/>
<dbReference type="KEGG" id="mmu:68742"/>
<dbReference type="UCSC" id="uc009jtj.1">
    <molecule id="Q9D123-1"/>
    <property type="organism name" value="mouse"/>
</dbReference>
<dbReference type="UCSC" id="uc009jtl.1">
    <molecule id="Q9D123-2"/>
    <property type="organism name" value="mouse"/>
</dbReference>
<dbReference type="AGR" id="MGI:1915992"/>
<dbReference type="CTD" id="124446"/>
<dbReference type="MGI" id="MGI:1915992">
    <property type="gene designation" value="Tmem219"/>
</dbReference>
<dbReference type="VEuPathDB" id="HostDB:ENSMUSG00000060538"/>
<dbReference type="eggNOG" id="ENOG502S30C">
    <property type="taxonomic scope" value="Eukaryota"/>
</dbReference>
<dbReference type="GeneTree" id="ENSGT00940000153883"/>
<dbReference type="InParanoid" id="Q9D123"/>
<dbReference type="TreeFam" id="TF338507"/>
<dbReference type="Reactome" id="R-MMU-6803211">
    <property type="pathway name" value="TP53 Regulates Transcription of Death Receptors and Ligands"/>
</dbReference>
<dbReference type="BioGRID-ORCS" id="68742">
    <property type="hits" value="0 hits in 78 CRISPR screens"/>
</dbReference>
<dbReference type="ChiTaRS" id="Tmem219">
    <property type="organism name" value="mouse"/>
</dbReference>
<dbReference type="PRO" id="PR:Q9D123"/>
<dbReference type="Proteomes" id="UP000000589">
    <property type="component" value="Chromosome 7"/>
</dbReference>
<dbReference type="RNAct" id="Q9D123">
    <property type="molecule type" value="protein"/>
</dbReference>
<dbReference type="Bgee" id="ENSMUSG00000060538">
    <property type="expression patterns" value="Expressed in lacrimal gland and 214 other cell types or tissues"/>
</dbReference>
<dbReference type="ExpressionAtlas" id="Q9D123">
    <property type="expression patterns" value="baseline and differential"/>
</dbReference>
<dbReference type="GO" id="GO:0005886">
    <property type="term" value="C:plasma membrane"/>
    <property type="evidence" value="ECO:0007669"/>
    <property type="project" value="UniProtKB-SubCell"/>
</dbReference>
<dbReference type="GO" id="GO:0006915">
    <property type="term" value="P:apoptotic process"/>
    <property type="evidence" value="ECO:0007669"/>
    <property type="project" value="UniProtKB-KW"/>
</dbReference>
<dbReference type="InterPro" id="IPR039493">
    <property type="entry name" value="TMEM248/TMEM219"/>
</dbReference>
<dbReference type="InterPro" id="IPR039587">
    <property type="entry name" value="TMEM248/TMEM219_dom"/>
</dbReference>
<dbReference type="PANTHER" id="PTHR16002:SF6">
    <property type="entry name" value="INSULIN-LIKE GROWTH FACTOR-BINDING PROTEIN 3 RECEPTOR"/>
    <property type="match status" value="1"/>
</dbReference>
<dbReference type="PANTHER" id="PTHR16002">
    <property type="entry name" value="TRANSMEMBRANE PROTEIN 248-LIKE"/>
    <property type="match status" value="1"/>
</dbReference>
<dbReference type="Pfam" id="PF14940">
    <property type="entry name" value="TMEM219"/>
    <property type="match status" value="1"/>
</dbReference>
<protein>
    <recommendedName>
        <fullName>Insulin-like growth factor-binding protein 3 receptor</fullName>
        <shortName>IGFBP-3R</shortName>
    </recommendedName>
    <alternativeName>
        <fullName>Transmembrane protein 219</fullName>
    </alternativeName>
</protein>
<keyword id="KW-0025">Alternative splicing</keyword>
<keyword id="KW-0053">Apoptosis</keyword>
<keyword id="KW-1003">Cell membrane</keyword>
<keyword id="KW-0325">Glycoprotein</keyword>
<keyword id="KW-0472">Membrane</keyword>
<keyword id="KW-0675">Receptor</keyword>
<keyword id="KW-1185">Reference proteome</keyword>
<keyword id="KW-0732">Signal</keyword>
<keyword id="KW-0812">Transmembrane</keyword>
<keyword id="KW-1133">Transmembrane helix</keyword>